<evidence type="ECO:0000255" key="1">
    <source>
        <dbReference type="HAMAP-Rule" id="MF_00075"/>
    </source>
</evidence>
<comment type="function">
    <text evidence="1">One of the essential components for the initiation of protein synthesis. Stabilizes the binding of IF-2 and IF-3 on the 30S subunit to which N-formylmethionyl-tRNA(fMet) subsequently binds. Helps modulate mRNA selection, yielding the 30S pre-initiation complex (PIC). Upon addition of the 50S ribosomal subunit IF-1, IF-2 and IF-3 are released leaving the mature 70S translation initiation complex.</text>
</comment>
<comment type="subunit">
    <text evidence="1">Component of the 30S ribosomal translation pre-initiation complex which assembles on the 30S ribosome in the order IF-2 and IF-3, IF-1 and N-formylmethionyl-tRNA(fMet); mRNA recruitment can occur at any time during PIC assembly.</text>
</comment>
<comment type="subcellular location">
    <subcellularLocation>
        <location evidence="1">Plastid</location>
        <location evidence="1">Chloroplast</location>
    </subcellularLocation>
</comment>
<comment type="similarity">
    <text evidence="1">Belongs to the IF-1 family.</text>
</comment>
<geneLocation type="chloroplast"/>
<reference key="1">
    <citation type="journal article" date="2007" name="Mol. Biol. Evol.">
        <title>Chloroplast genome (cpDNA) of Cycas taitungensis and 56 cp protein-coding genes of Gnetum parvifolium: insights into cpDNA evolution and phylogeny of extant seed plants.</title>
        <authorList>
            <person name="Wu C.-S."/>
            <person name="Wang Y.-N."/>
            <person name="Liu S.-M."/>
            <person name="Chaw S.-M."/>
        </authorList>
    </citation>
    <scope>NUCLEOTIDE SEQUENCE [LARGE SCALE GENOMIC DNA]</scope>
</reference>
<organism>
    <name type="scientific">Cycas taitungensis</name>
    <name type="common">Prince sago</name>
    <name type="synonym">Cycas taiwaniana</name>
    <dbReference type="NCBI Taxonomy" id="54799"/>
    <lineage>
        <taxon>Eukaryota</taxon>
        <taxon>Viridiplantae</taxon>
        <taxon>Streptophyta</taxon>
        <taxon>Embryophyta</taxon>
        <taxon>Tracheophyta</taxon>
        <taxon>Spermatophyta</taxon>
        <taxon>Cycadidae</taxon>
        <taxon>Cycadales</taxon>
        <taxon>Cycadaceae</taxon>
        <taxon>Cycas</taxon>
    </lineage>
</organism>
<sequence>MNKQNLIDVEGSVTESLPNGMFRVRLDNGCQVPTHISGKIRRNHVRILPGDRVKVELSPYDLTKGRIIYRLRNKSSNDWITS</sequence>
<gene>
    <name evidence="1" type="primary">infA</name>
</gene>
<proteinExistence type="inferred from homology"/>
<feature type="chain" id="PRO_0000338961" description="Translation initiation factor IF-1, chloroplastic">
    <location>
        <begin position="1"/>
        <end position="82"/>
    </location>
</feature>
<feature type="domain" description="S1-like" evidence="1">
    <location>
        <begin position="1"/>
        <end position="72"/>
    </location>
</feature>
<accession>A6H5L6</accession>
<keyword id="KW-0150">Chloroplast</keyword>
<keyword id="KW-0396">Initiation factor</keyword>
<keyword id="KW-0934">Plastid</keyword>
<keyword id="KW-0648">Protein biosynthesis</keyword>
<keyword id="KW-0694">RNA-binding</keyword>
<keyword id="KW-0699">rRNA-binding</keyword>
<name>IF1C_CYCTA</name>
<dbReference type="EMBL" id="AP009339">
    <property type="protein sequence ID" value="BAF64982.1"/>
    <property type="molecule type" value="Genomic_DNA"/>
</dbReference>
<dbReference type="RefSeq" id="YP_001312241.1">
    <property type="nucleotide sequence ID" value="NC_009618.1"/>
</dbReference>
<dbReference type="SMR" id="A6H5L6"/>
<dbReference type="GeneID" id="5309594"/>
<dbReference type="GO" id="GO:0009507">
    <property type="term" value="C:chloroplast"/>
    <property type="evidence" value="ECO:0007669"/>
    <property type="project" value="UniProtKB-SubCell"/>
</dbReference>
<dbReference type="GO" id="GO:0005829">
    <property type="term" value="C:cytosol"/>
    <property type="evidence" value="ECO:0007669"/>
    <property type="project" value="TreeGrafter"/>
</dbReference>
<dbReference type="GO" id="GO:0043022">
    <property type="term" value="F:ribosome binding"/>
    <property type="evidence" value="ECO:0007669"/>
    <property type="project" value="UniProtKB-UniRule"/>
</dbReference>
<dbReference type="GO" id="GO:0019843">
    <property type="term" value="F:rRNA binding"/>
    <property type="evidence" value="ECO:0007669"/>
    <property type="project" value="UniProtKB-UniRule"/>
</dbReference>
<dbReference type="GO" id="GO:0003743">
    <property type="term" value="F:translation initiation factor activity"/>
    <property type="evidence" value="ECO:0007669"/>
    <property type="project" value="UniProtKB-UniRule"/>
</dbReference>
<dbReference type="CDD" id="cd04451">
    <property type="entry name" value="S1_IF1"/>
    <property type="match status" value="1"/>
</dbReference>
<dbReference type="FunFam" id="2.40.50.140:FF:000002">
    <property type="entry name" value="Translation initiation factor IF-1"/>
    <property type="match status" value="1"/>
</dbReference>
<dbReference type="Gene3D" id="2.40.50.140">
    <property type="entry name" value="Nucleic acid-binding proteins"/>
    <property type="match status" value="1"/>
</dbReference>
<dbReference type="HAMAP" id="MF_00075">
    <property type="entry name" value="IF_1"/>
    <property type="match status" value="1"/>
</dbReference>
<dbReference type="InterPro" id="IPR012340">
    <property type="entry name" value="NA-bd_OB-fold"/>
</dbReference>
<dbReference type="InterPro" id="IPR006196">
    <property type="entry name" value="RNA-binding_domain_S1_IF1"/>
</dbReference>
<dbReference type="InterPro" id="IPR004368">
    <property type="entry name" value="TIF_IF1"/>
</dbReference>
<dbReference type="NCBIfam" id="TIGR00008">
    <property type="entry name" value="infA"/>
    <property type="match status" value="1"/>
</dbReference>
<dbReference type="PANTHER" id="PTHR33370">
    <property type="entry name" value="TRANSLATION INITIATION FACTOR IF-1, CHLOROPLASTIC"/>
    <property type="match status" value="1"/>
</dbReference>
<dbReference type="PANTHER" id="PTHR33370:SF1">
    <property type="entry name" value="TRANSLATION INITIATION FACTOR IF-1, CHLOROPLASTIC"/>
    <property type="match status" value="1"/>
</dbReference>
<dbReference type="Pfam" id="PF01176">
    <property type="entry name" value="eIF-1a"/>
    <property type="match status" value="1"/>
</dbReference>
<dbReference type="SUPFAM" id="SSF50249">
    <property type="entry name" value="Nucleic acid-binding proteins"/>
    <property type="match status" value="1"/>
</dbReference>
<dbReference type="PROSITE" id="PS50832">
    <property type="entry name" value="S1_IF1_TYPE"/>
    <property type="match status" value="1"/>
</dbReference>
<protein>
    <recommendedName>
        <fullName evidence="1">Translation initiation factor IF-1, chloroplastic</fullName>
    </recommendedName>
</protein>